<proteinExistence type="inferred from homology"/>
<accession>A1W1Z0</accession>
<evidence type="ECO:0000255" key="1">
    <source>
        <dbReference type="HAMAP-Rule" id="MF_01300"/>
    </source>
</evidence>
<name>DCTA_ACISJ</name>
<keyword id="KW-0997">Cell inner membrane</keyword>
<keyword id="KW-1003">Cell membrane</keyword>
<keyword id="KW-0472">Membrane</keyword>
<keyword id="KW-0769">Symport</keyword>
<keyword id="KW-0812">Transmembrane</keyword>
<keyword id="KW-1133">Transmembrane helix</keyword>
<keyword id="KW-0813">Transport</keyword>
<gene>
    <name evidence="1" type="primary">dctA</name>
    <name type="ordered locus">Ajs_0009</name>
</gene>
<organism>
    <name type="scientific">Acidovorax sp. (strain JS42)</name>
    <dbReference type="NCBI Taxonomy" id="232721"/>
    <lineage>
        <taxon>Bacteria</taxon>
        <taxon>Pseudomonadati</taxon>
        <taxon>Pseudomonadota</taxon>
        <taxon>Betaproteobacteria</taxon>
        <taxon>Burkholderiales</taxon>
        <taxon>Comamonadaceae</taxon>
        <taxon>Acidovorax</taxon>
    </lineage>
</organism>
<reference key="1">
    <citation type="submission" date="2006-12" db="EMBL/GenBank/DDBJ databases">
        <title>Complete sequence of chromosome 1 of Acidovorax sp. JS42.</title>
        <authorList>
            <person name="Copeland A."/>
            <person name="Lucas S."/>
            <person name="Lapidus A."/>
            <person name="Barry K."/>
            <person name="Detter J.C."/>
            <person name="Glavina del Rio T."/>
            <person name="Dalin E."/>
            <person name="Tice H."/>
            <person name="Pitluck S."/>
            <person name="Chertkov O."/>
            <person name="Brettin T."/>
            <person name="Bruce D."/>
            <person name="Han C."/>
            <person name="Tapia R."/>
            <person name="Gilna P."/>
            <person name="Schmutz J."/>
            <person name="Larimer F."/>
            <person name="Land M."/>
            <person name="Hauser L."/>
            <person name="Kyrpides N."/>
            <person name="Kim E."/>
            <person name="Stahl D."/>
            <person name="Richardson P."/>
        </authorList>
    </citation>
    <scope>NUCLEOTIDE SEQUENCE [LARGE SCALE GENOMIC DNA]</scope>
    <source>
        <strain>JS42</strain>
    </source>
</reference>
<comment type="function">
    <text evidence="1">Responsible for the transport of dicarboxylates such as succinate, fumarate, and malate from the periplasm across the membrane.</text>
</comment>
<comment type="subcellular location">
    <subcellularLocation>
        <location evidence="1">Cell inner membrane</location>
        <topology evidence="1">Multi-pass membrane protein</topology>
    </subcellularLocation>
</comment>
<comment type="similarity">
    <text evidence="1">Belongs to the dicarboxylate/amino acid:cation symporter (DAACS) (TC 2.A.23) family.</text>
</comment>
<sequence>MHAISSAAPAPSVRLPFYRQLYFQVVFAIIIGVLLGHFQPEYGAAMKPFGDAFIKLIKMIIAPVIFLTIVTGIASMSHLSAVGRVFGKAMAYFLTFSTLALVVGLVVANVMQPGTGMHINVAELDQTAVKGYVSKSHEMTLTGFALDIIPKTLISPFVGDNILQVLLVAVLFGVSLAMVGDAGKPILDFLDGLTKPVFKLVNIVMKAAPIGAFGAMAFTIGKFGLGSLVNLAELVLTFYITSAVFVLVVLGAVARACGFSVLKLIRYLKAELLLVLGTSSSESALPSLMEKMEKAGCAKSVVGLVVPTGYSFNLDGTNIYMTLAALFIAQATDTHLTLGHQIALLLVAMLSSKGAAGVTGAGFITLAATLAVVPEVPVAGMALILGVDRFMSECRSLTNFIGNAVATVVVSRWENALDADRLHRVLDGEAEFLPEPERAVEPVVLARHRA</sequence>
<protein>
    <recommendedName>
        <fullName evidence="1">C4-dicarboxylate transport protein</fullName>
    </recommendedName>
</protein>
<dbReference type="EMBL" id="CP000539">
    <property type="protein sequence ID" value="ABM40265.1"/>
    <property type="molecule type" value="Genomic_DNA"/>
</dbReference>
<dbReference type="SMR" id="A1W1Z0"/>
<dbReference type="STRING" id="232721.Ajs_0009"/>
<dbReference type="KEGG" id="ajs:Ajs_0009"/>
<dbReference type="eggNOG" id="COG1301">
    <property type="taxonomic scope" value="Bacteria"/>
</dbReference>
<dbReference type="HOGENOM" id="CLU_019375_7_0_4"/>
<dbReference type="Proteomes" id="UP000000645">
    <property type="component" value="Chromosome"/>
</dbReference>
<dbReference type="GO" id="GO:0005886">
    <property type="term" value="C:plasma membrane"/>
    <property type="evidence" value="ECO:0007669"/>
    <property type="project" value="UniProtKB-SubCell"/>
</dbReference>
<dbReference type="GO" id="GO:0015138">
    <property type="term" value="F:fumarate transmembrane transporter activity"/>
    <property type="evidence" value="ECO:0007669"/>
    <property type="project" value="TreeGrafter"/>
</dbReference>
<dbReference type="GO" id="GO:0015366">
    <property type="term" value="F:malate:proton symporter activity"/>
    <property type="evidence" value="ECO:0007669"/>
    <property type="project" value="TreeGrafter"/>
</dbReference>
<dbReference type="GO" id="GO:0015141">
    <property type="term" value="F:succinate transmembrane transporter activity"/>
    <property type="evidence" value="ECO:0007669"/>
    <property type="project" value="TreeGrafter"/>
</dbReference>
<dbReference type="GO" id="GO:0070778">
    <property type="term" value="P:L-aspartate transmembrane transport"/>
    <property type="evidence" value="ECO:0007669"/>
    <property type="project" value="TreeGrafter"/>
</dbReference>
<dbReference type="FunFam" id="1.10.3860.10:FF:000001">
    <property type="entry name" value="C4-dicarboxylate transport protein"/>
    <property type="match status" value="1"/>
</dbReference>
<dbReference type="Gene3D" id="1.10.3860.10">
    <property type="entry name" value="Sodium:dicarboxylate symporter"/>
    <property type="match status" value="1"/>
</dbReference>
<dbReference type="HAMAP" id="MF_01300">
    <property type="entry name" value="C4_dicarb_transport"/>
    <property type="match status" value="1"/>
</dbReference>
<dbReference type="InterPro" id="IPR023954">
    <property type="entry name" value="C4_dicarb_transport"/>
</dbReference>
<dbReference type="InterPro" id="IPR001991">
    <property type="entry name" value="Na-dicarboxylate_symporter"/>
</dbReference>
<dbReference type="InterPro" id="IPR018107">
    <property type="entry name" value="Na-dicarboxylate_symporter_CS"/>
</dbReference>
<dbReference type="InterPro" id="IPR036458">
    <property type="entry name" value="Na:dicarbo_symporter_sf"/>
</dbReference>
<dbReference type="NCBIfam" id="NF002461">
    <property type="entry name" value="PRK01663.1"/>
    <property type="match status" value="1"/>
</dbReference>
<dbReference type="NCBIfam" id="NF009587">
    <property type="entry name" value="PRK13027.1"/>
    <property type="match status" value="1"/>
</dbReference>
<dbReference type="PANTHER" id="PTHR42865:SF1">
    <property type="entry name" value="AEROBIC C4-DICARBOXYLATE TRANSPORT PROTEIN"/>
    <property type="match status" value="1"/>
</dbReference>
<dbReference type="PANTHER" id="PTHR42865">
    <property type="entry name" value="PROTON/GLUTAMATE-ASPARTATE SYMPORTER"/>
    <property type="match status" value="1"/>
</dbReference>
<dbReference type="Pfam" id="PF00375">
    <property type="entry name" value="SDF"/>
    <property type="match status" value="1"/>
</dbReference>
<dbReference type="PRINTS" id="PR00173">
    <property type="entry name" value="EDTRNSPORT"/>
</dbReference>
<dbReference type="SUPFAM" id="SSF118215">
    <property type="entry name" value="Proton glutamate symport protein"/>
    <property type="match status" value="1"/>
</dbReference>
<dbReference type="PROSITE" id="PS00713">
    <property type="entry name" value="NA_DICARBOXYL_SYMP_1"/>
    <property type="match status" value="1"/>
</dbReference>
<dbReference type="PROSITE" id="PS00714">
    <property type="entry name" value="NA_DICARBOXYL_SYMP_2"/>
    <property type="match status" value="1"/>
</dbReference>
<feature type="chain" id="PRO_0000321965" description="C4-dicarboxylate transport protein">
    <location>
        <begin position="1"/>
        <end position="450"/>
    </location>
</feature>
<feature type="transmembrane region" description="Helical" evidence="1">
    <location>
        <begin position="25"/>
        <end position="45"/>
    </location>
</feature>
<feature type="transmembrane region" description="Helical" evidence="1">
    <location>
        <begin position="56"/>
        <end position="76"/>
    </location>
</feature>
<feature type="transmembrane region" description="Helical" evidence="1">
    <location>
        <begin position="90"/>
        <end position="110"/>
    </location>
</feature>
<feature type="transmembrane region" description="Helical" evidence="1">
    <location>
        <begin position="162"/>
        <end position="182"/>
    </location>
</feature>
<feature type="transmembrane region" description="Helical" evidence="1">
    <location>
        <begin position="200"/>
        <end position="220"/>
    </location>
</feature>
<feature type="transmembrane region" description="Helical" evidence="1">
    <location>
        <begin position="234"/>
        <end position="254"/>
    </location>
</feature>
<feature type="transmembrane region" description="Helical" evidence="1">
    <location>
        <begin position="319"/>
        <end position="339"/>
    </location>
</feature>
<feature type="transmembrane region" description="Helical" evidence="1">
    <location>
        <begin position="367"/>
        <end position="387"/>
    </location>
</feature>